<reference key="1">
    <citation type="journal article" date="1994" name="Yeast">
        <title>The sequence of a 22.4 kb DNA fragment from the left arm of yeast chromosome II reveals homologues to bacterial proline synthetase and murine alpha-adaptin, as well as a new permease and a DNA-binding protein.</title>
        <authorList>
            <person name="de Wergifosse P."/>
            <person name="Jacques B."/>
            <person name="Jonniaux J.-L."/>
            <person name="Purnelle B."/>
            <person name="Skala J."/>
            <person name="Goffeau A."/>
        </authorList>
    </citation>
    <scope>NUCLEOTIDE SEQUENCE [GENOMIC DNA]</scope>
    <source>
        <strain>ATCC 204508 / S288c</strain>
    </source>
</reference>
<reference key="2">
    <citation type="journal article" date="1994" name="EMBO J.">
        <title>Complete DNA sequence of yeast chromosome II.</title>
        <authorList>
            <person name="Feldmann H."/>
            <person name="Aigle M."/>
            <person name="Aljinovic G."/>
            <person name="Andre B."/>
            <person name="Baclet M.C."/>
            <person name="Barthe C."/>
            <person name="Baur A."/>
            <person name="Becam A.-M."/>
            <person name="Biteau N."/>
            <person name="Boles E."/>
            <person name="Brandt T."/>
            <person name="Brendel M."/>
            <person name="Brueckner M."/>
            <person name="Bussereau F."/>
            <person name="Christiansen C."/>
            <person name="Contreras R."/>
            <person name="Crouzet M."/>
            <person name="Cziepluch C."/>
            <person name="Demolis N."/>
            <person name="Delaveau T."/>
            <person name="Doignon F."/>
            <person name="Domdey H."/>
            <person name="Duesterhus S."/>
            <person name="Dubois E."/>
            <person name="Dujon B."/>
            <person name="El Bakkoury M."/>
            <person name="Entian K.-D."/>
            <person name="Feuermann M."/>
            <person name="Fiers W."/>
            <person name="Fobo G.M."/>
            <person name="Fritz C."/>
            <person name="Gassenhuber J."/>
            <person name="Glansdorff N."/>
            <person name="Goffeau A."/>
            <person name="Grivell L.A."/>
            <person name="de Haan M."/>
            <person name="Hein C."/>
            <person name="Herbert C.J."/>
            <person name="Hollenberg C.P."/>
            <person name="Holmstroem K."/>
            <person name="Jacq C."/>
            <person name="Jacquet M."/>
            <person name="Jauniaux J.-C."/>
            <person name="Jonniaux J.-L."/>
            <person name="Kallesoee T."/>
            <person name="Kiesau P."/>
            <person name="Kirchrath L."/>
            <person name="Koetter P."/>
            <person name="Korol S."/>
            <person name="Liebl S."/>
            <person name="Logghe M."/>
            <person name="Lohan A.J.E."/>
            <person name="Louis E.J."/>
            <person name="Li Z.Y."/>
            <person name="Maat M.J."/>
            <person name="Mallet L."/>
            <person name="Mannhaupt G."/>
            <person name="Messenguy F."/>
            <person name="Miosga T."/>
            <person name="Molemans F."/>
            <person name="Mueller S."/>
            <person name="Nasr F."/>
            <person name="Obermaier B."/>
            <person name="Perea J."/>
            <person name="Pierard A."/>
            <person name="Piravandi E."/>
            <person name="Pohl F.M."/>
            <person name="Pohl T.M."/>
            <person name="Potier S."/>
            <person name="Proft M."/>
            <person name="Purnelle B."/>
            <person name="Ramezani Rad M."/>
            <person name="Rieger M."/>
            <person name="Rose M."/>
            <person name="Schaaff-Gerstenschlaeger I."/>
            <person name="Scherens B."/>
            <person name="Schwarzlose C."/>
            <person name="Skala J."/>
            <person name="Slonimski P.P."/>
            <person name="Smits P.H.M."/>
            <person name="Souciet J.-L."/>
            <person name="Steensma H.Y."/>
            <person name="Stucka R."/>
            <person name="Urrestarazu L.A."/>
            <person name="van der Aart Q.J.M."/>
            <person name="Van Dyck L."/>
            <person name="Vassarotti A."/>
            <person name="Vetter I."/>
            <person name="Vierendeels F."/>
            <person name="Vissers S."/>
            <person name="Wagner G."/>
            <person name="de Wergifosse P."/>
            <person name="Wolfe K.H."/>
            <person name="Zagulski M."/>
            <person name="Zimmermann F.K."/>
            <person name="Mewes H.-W."/>
            <person name="Kleine K."/>
        </authorList>
    </citation>
    <scope>NUCLEOTIDE SEQUENCE [LARGE SCALE GENOMIC DNA]</scope>
    <source>
        <strain>ATCC 204508 / S288c</strain>
    </source>
</reference>
<reference key="3">
    <citation type="journal article" date="2014" name="G3 (Bethesda)">
        <title>The reference genome sequence of Saccharomyces cerevisiae: Then and now.</title>
        <authorList>
            <person name="Engel S.R."/>
            <person name="Dietrich F.S."/>
            <person name="Fisk D.G."/>
            <person name="Binkley G."/>
            <person name="Balakrishnan R."/>
            <person name="Costanzo M.C."/>
            <person name="Dwight S.S."/>
            <person name="Hitz B.C."/>
            <person name="Karra K."/>
            <person name="Nash R.S."/>
            <person name="Weng S."/>
            <person name="Wong E.D."/>
            <person name="Lloyd P."/>
            <person name="Skrzypek M.S."/>
            <person name="Miyasato S.R."/>
            <person name="Simison M."/>
            <person name="Cherry J.M."/>
        </authorList>
    </citation>
    <scope>GENOME REANNOTATION</scope>
    <source>
        <strain>ATCC 204508 / S288c</strain>
    </source>
</reference>
<reference key="4">
    <citation type="journal article" date="2007" name="Genome Res.">
        <title>Approaching a complete repository of sequence-verified protein-encoding clones for Saccharomyces cerevisiae.</title>
        <authorList>
            <person name="Hu Y."/>
            <person name="Rolfs A."/>
            <person name="Bhullar B."/>
            <person name="Murthy T.V.S."/>
            <person name="Zhu C."/>
            <person name="Berger M.F."/>
            <person name="Camargo A.A."/>
            <person name="Kelley F."/>
            <person name="McCarron S."/>
            <person name="Jepson D."/>
            <person name="Richardson A."/>
            <person name="Raphael J."/>
            <person name="Moreira D."/>
            <person name="Taycher E."/>
            <person name="Zuo D."/>
            <person name="Mohr S."/>
            <person name="Kane M.F."/>
            <person name="Williamson J."/>
            <person name="Simpson A.J.G."/>
            <person name="Bulyk M.L."/>
            <person name="Harlow E."/>
            <person name="Marsischky G."/>
            <person name="Kolodner R.D."/>
            <person name="LaBaer J."/>
        </authorList>
    </citation>
    <scope>NUCLEOTIDE SEQUENCE [GENOMIC DNA]</scope>
    <source>
        <strain>ATCC 204508 / S288c</strain>
    </source>
</reference>
<reference key="5">
    <citation type="journal article" date="2003" name="Nature">
        <title>Global analysis of protein localization in budding yeast.</title>
        <authorList>
            <person name="Huh W.-K."/>
            <person name="Falvo J.V."/>
            <person name="Gerke L.C."/>
            <person name="Carroll A.S."/>
            <person name="Howson R.W."/>
            <person name="Weissman J.S."/>
            <person name="O'Shea E.K."/>
        </authorList>
    </citation>
    <scope>SUBCELLULAR LOCATION [LARGE SCALE ANALYSIS]</scope>
</reference>
<reference key="6">
    <citation type="journal article" date="2003" name="Nature">
        <title>Global analysis of protein expression in yeast.</title>
        <authorList>
            <person name="Ghaemmaghami S."/>
            <person name="Huh W.-K."/>
            <person name="Bower K."/>
            <person name="Howson R.W."/>
            <person name="Belle A."/>
            <person name="Dephoure N."/>
            <person name="O'Shea E.K."/>
            <person name="Weissman J.S."/>
        </authorList>
    </citation>
    <scope>LEVEL OF PROTEIN EXPRESSION [LARGE SCALE ANALYSIS]</scope>
</reference>
<reference key="7">
    <citation type="journal article" date="2012" name="Proc. Natl. Acad. Sci. U.S.A.">
        <title>N-terminal acetylome analyses and functional insights of the N-terminal acetyltransferase NatB.</title>
        <authorList>
            <person name="Van Damme P."/>
            <person name="Lasa M."/>
            <person name="Polevoda B."/>
            <person name="Gazquez C."/>
            <person name="Elosegui-Artola A."/>
            <person name="Kim D.S."/>
            <person name="De Juan-Pardo E."/>
            <person name="Demeyer K."/>
            <person name="Hole K."/>
            <person name="Larrea E."/>
            <person name="Timmerman E."/>
            <person name="Prieto J."/>
            <person name="Arnesen T."/>
            <person name="Sherman F."/>
            <person name="Gevaert K."/>
            <person name="Aldabe R."/>
        </authorList>
    </citation>
    <scope>ACETYLATION [LARGE SCALE ANALYSIS] AT SER-2</scope>
    <scope>CLEAVAGE OF INITIATOR METHIONINE [LARGE SCALE ANALYSIS]</scope>
    <scope>IDENTIFICATION BY MASS SPECTROMETRY [LARGE SCALE ANALYSIS]</scope>
</reference>
<reference key="8">
    <citation type="journal article" date="2003" name="Acta Crystallogr. D">
        <title>Structure of a yeast hypothetical protein selected by a structural genomics approach.</title>
        <authorList>
            <person name="Eswaramoorthy S."/>
            <person name="Gerchman S."/>
            <person name="Graziano V."/>
            <person name="Kycia H."/>
            <person name="Studier W."/>
            <person name="Swaminathan S."/>
        </authorList>
    </citation>
    <scope>X-RAY CRYSTALLOGRAPHY (2.0 ANGSTROMS)</scope>
    <scope>PYRIDOXAL PHOSPHATE AT LYS-49</scope>
    <source>
        <strain>ATCC 204508 / S288c</strain>
    </source>
</reference>
<keyword id="KW-0002">3D-structure</keyword>
<keyword id="KW-0007">Acetylation</keyword>
<keyword id="KW-0963">Cytoplasm</keyword>
<keyword id="KW-0539">Nucleus</keyword>
<keyword id="KW-0663">Pyridoxal phosphate</keyword>
<keyword id="KW-1185">Reference proteome</keyword>
<organism>
    <name type="scientific">Saccharomyces cerevisiae (strain ATCC 204508 / S288c)</name>
    <name type="common">Baker's yeast</name>
    <dbReference type="NCBI Taxonomy" id="559292"/>
    <lineage>
        <taxon>Eukaryota</taxon>
        <taxon>Fungi</taxon>
        <taxon>Dikarya</taxon>
        <taxon>Ascomycota</taxon>
        <taxon>Saccharomycotina</taxon>
        <taxon>Saccharomycetes</taxon>
        <taxon>Saccharomycetales</taxon>
        <taxon>Saccharomycetaceae</taxon>
        <taxon>Saccharomyces</taxon>
    </lineage>
</organism>
<dbReference type="EMBL" id="X78214">
    <property type="protein sequence ID" value="CAA55058.1"/>
    <property type="molecule type" value="Genomic_DNA"/>
</dbReference>
<dbReference type="EMBL" id="Z35797">
    <property type="protein sequence ID" value="CAA84856.1"/>
    <property type="molecule type" value="Genomic_DNA"/>
</dbReference>
<dbReference type="EMBL" id="AY692874">
    <property type="protein sequence ID" value="AAT92893.1"/>
    <property type="molecule type" value="Genomic_DNA"/>
</dbReference>
<dbReference type="EMBL" id="BK006936">
    <property type="protein sequence ID" value="DAA07083.1"/>
    <property type="molecule type" value="Genomic_DNA"/>
</dbReference>
<dbReference type="PIR" id="S50294">
    <property type="entry name" value="S50294"/>
</dbReference>
<dbReference type="RefSeq" id="NP_009517.1">
    <property type="nucleotide sequence ID" value="NM_001178276.1"/>
</dbReference>
<dbReference type="PDB" id="1B54">
    <property type="method" value="X-ray"/>
    <property type="resolution" value="2.10 A"/>
    <property type="chains" value="A=1-257"/>
</dbReference>
<dbReference type="PDB" id="1CT5">
    <property type="method" value="X-ray"/>
    <property type="resolution" value="2.00 A"/>
    <property type="chains" value="A=2-257"/>
</dbReference>
<dbReference type="PDBsum" id="1B54"/>
<dbReference type="PDBsum" id="1CT5"/>
<dbReference type="SMR" id="P38197"/>
<dbReference type="BioGRID" id="32661">
    <property type="interactions" value="137"/>
</dbReference>
<dbReference type="DIP" id="DIP-6608N"/>
<dbReference type="FunCoup" id="P38197">
    <property type="interactions" value="595"/>
</dbReference>
<dbReference type="IntAct" id="P38197">
    <property type="interactions" value="61"/>
</dbReference>
<dbReference type="MINT" id="P38197"/>
<dbReference type="STRING" id="4932.YBL036C"/>
<dbReference type="iPTMnet" id="P38197"/>
<dbReference type="PaxDb" id="4932-YBL036C"/>
<dbReference type="PeptideAtlas" id="P38197"/>
<dbReference type="EnsemblFungi" id="YBL036C_mRNA">
    <property type="protein sequence ID" value="YBL036C"/>
    <property type="gene ID" value="YBL036C"/>
</dbReference>
<dbReference type="GeneID" id="852244"/>
<dbReference type="KEGG" id="sce:YBL036C"/>
<dbReference type="AGR" id="SGD:S000000132"/>
<dbReference type="SGD" id="S000000132">
    <property type="gene designation" value="YBL036C"/>
</dbReference>
<dbReference type="VEuPathDB" id="FungiDB:YBL036C"/>
<dbReference type="eggNOG" id="KOG3157">
    <property type="taxonomic scope" value="Eukaryota"/>
</dbReference>
<dbReference type="GeneTree" id="ENSGT00390000004928"/>
<dbReference type="HOGENOM" id="CLU_059988_2_0_1"/>
<dbReference type="InParanoid" id="P38197"/>
<dbReference type="OMA" id="PLEWHMI"/>
<dbReference type="OrthoDB" id="10264196at2759"/>
<dbReference type="BioCyc" id="YEAST:G3O-28938-MONOMER"/>
<dbReference type="BioGRID-ORCS" id="852244">
    <property type="hits" value="0 hits in 10 CRISPR screens"/>
</dbReference>
<dbReference type="EvolutionaryTrace" id="P38197"/>
<dbReference type="PRO" id="PR:P38197"/>
<dbReference type="Proteomes" id="UP000002311">
    <property type="component" value="Chromosome II"/>
</dbReference>
<dbReference type="RNAct" id="P38197">
    <property type="molecule type" value="protein"/>
</dbReference>
<dbReference type="GO" id="GO:0005737">
    <property type="term" value="C:cytoplasm"/>
    <property type="evidence" value="ECO:0000318"/>
    <property type="project" value="GO_Central"/>
</dbReference>
<dbReference type="GO" id="GO:0005634">
    <property type="term" value="C:nucleus"/>
    <property type="evidence" value="ECO:0007669"/>
    <property type="project" value="UniProtKB-SubCell"/>
</dbReference>
<dbReference type="GO" id="GO:0030170">
    <property type="term" value="F:pyridoxal phosphate binding"/>
    <property type="evidence" value="ECO:0000314"/>
    <property type="project" value="SGD"/>
</dbReference>
<dbReference type="GO" id="GO:0042816">
    <property type="term" value="P:vitamin B6 metabolic process"/>
    <property type="evidence" value="ECO:0000315"/>
    <property type="project" value="SGD"/>
</dbReference>
<dbReference type="CDD" id="cd06822">
    <property type="entry name" value="PLPDE_III_YBL036c_euk"/>
    <property type="match status" value="1"/>
</dbReference>
<dbReference type="FunFam" id="3.20.20.10:FF:000007">
    <property type="entry name" value="Pyridoxal phosphate homeostasis protein"/>
    <property type="match status" value="1"/>
</dbReference>
<dbReference type="Gene3D" id="3.20.20.10">
    <property type="entry name" value="Alanine racemase"/>
    <property type="match status" value="1"/>
</dbReference>
<dbReference type="HAMAP" id="MF_02087">
    <property type="entry name" value="PLP_homeostasis"/>
    <property type="match status" value="1"/>
</dbReference>
<dbReference type="InterPro" id="IPR001608">
    <property type="entry name" value="Ala_racemase_N"/>
</dbReference>
<dbReference type="InterPro" id="IPR029066">
    <property type="entry name" value="PLP-binding_barrel"/>
</dbReference>
<dbReference type="InterPro" id="IPR011078">
    <property type="entry name" value="PyrdxlP_homeostasis"/>
</dbReference>
<dbReference type="NCBIfam" id="TIGR00044">
    <property type="entry name" value="YggS family pyridoxal phosphate-dependent enzyme"/>
    <property type="match status" value="1"/>
</dbReference>
<dbReference type="PANTHER" id="PTHR10146">
    <property type="entry name" value="PROLINE SYNTHETASE CO-TRANSCRIBED BACTERIAL HOMOLOG PROTEIN"/>
    <property type="match status" value="1"/>
</dbReference>
<dbReference type="PANTHER" id="PTHR10146:SF14">
    <property type="entry name" value="PYRIDOXAL PHOSPHATE HOMEOSTASIS PROTEIN"/>
    <property type="match status" value="1"/>
</dbReference>
<dbReference type="Pfam" id="PF01168">
    <property type="entry name" value="Ala_racemase_N"/>
    <property type="match status" value="1"/>
</dbReference>
<dbReference type="PIRSF" id="PIRSF004848">
    <property type="entry name" value="YBL036c_PLPDEIII"/>
    <property type="match status" value="1"/>
</dbReference>
<dbReference type="SUPFAM" id="SSF51419">
    <property type="entry name" value="PLP-binding barrel"/>
    <property type="match status" value="1"/>
</dbReference>
<dbReference type="PROSITE" id="PS01211">
    <property type="entry name" value="UPF0001"/>
    <property type="match status" value="1"/>
</dbReference>
<evidence type="ECO:0000255" key="1">
    <source>
        <dbReference type="HAMAP-Rule" id="MF_03225"/>
    </source>
</evidence>
<evidence type="ECO:0000269" key="2">
    <source>
    </source>
</evidence>
<evidence type="ECO:0000269" key="3">
    <source>
    </source>
</evidence>
<evidence type="ECO:0000269" key="4">
    <source>
    </source>
</evidence>
<evidence type="ECO:0000305" key="5"/>
<evidence type="ECO:0007744" key="6">
    <source>
    </source>
</evidence>
<evidence type="ECO:0007829" key="7">
    <source>
        <dbReference type="PDB" id="1B54"/>
    </source>
</evidence>
<evidence type="ECO:0007829" key="8">
    <source>
        <dbReference type="PDB" id="1CT5"/>
    </source>
</evidence>
<gene>
    <name type="ordered locus">YBL036C</name>
    <name type="ORF">YBL0413</name>
</gene>
<name>PLPHP_YEAST</name>
<proteinExistence type="evidence at protein level"/>
<accession>P38197</accession>
<accession>D6VPW3</accession>
<accession>Q6B256</accession>
<comment type="function">
    <text evidence="1">Pyridoxal 5'-phosphate (PLP)-binding protein, which may be involved in intracellular homeostatic regulation of pyridoxal 5'-phosphate (PLP), the active form of vitamin B6.</text>
</comment>
<comment type="subcellular location">
    <subcellularLocation>
        <location evidence="3">Cytoplasm</location>
    </subcellularLocation>
    <subcellularLocation>
        <location evidence="3">Nucleus</location>
    </subcellularLocation>
</comment>
<comment type="miscellaneous">
    <text evidence="4">Present with 4890 molecules/cell in log phase SD medium.</text>
</comment>
<comment type="similarity">
    <text evidence="1">Belongs to the pyridoxal phosphate-binding protein YggS/PROSC family.</text>
</comment>
<protein>
    <recommendedName>
        <fullName evidence="1">Pyridoxal phosphate homeostasis protein</fullName>
        <shortName evidence="1">PLP homeostasis protein</shortName>
    </recommendedName>
</protein>
<sequence length="257" mass="29123">MSTGITYDEDRKTQLIAQYESVREVVNAEAKNVHVNENASKILLLVVSKLKPASDIQILYDHGVREFGENYVQELIEKAKLLPDDIKWHFIGGLQTNKCKDLAKVPNLYSVETIDSLKKAKKLNESRAKFQPDCNPILCNVQINTSHEDQKSGLNNEAEIFEVIDFFLSEECKYIKLNGLMTIGSWNVSHEDSKENRDFATLVEWKKKIDAKFGTSLKLSMGMSADFREAIRQGTAEVRIGTDIFGARPPKNEARII</sequence>
<feature type="initiator methionine" description="Removed" evidence="6">
    <location>
        <position position="1"/>
    </location>
</feature>
<feature type="chain" id="PRO_0000163213" description="Pyridoxal phosphate homeostasis protein">
    <location>
        <begin position="2"/>
        <end position="257"/>
    </location>
</feature>
<feature type="modified residue" description="N-acetylserine" evidence="6">
    <location>
        <position position="2"/>
    </location>
</feature>
<feature type="modified residue" description="N6-(pyridoxal phosphate)lysine" evidence="1 2">
    <location>
        <position position="49"/>
    </location>
</feature>
<feature type="sequence conflict" description="In Ref. 4; AAT92893." evidence="5" ref="4">
    <original>D</original>
    <variation>G</variation>
    <location>
        <position position="8"/>
    </location>
</feature>
<feature type="helix" evidence="8">
    <location>
        <begin position="9"/>
        <end position="31"/>
    </location>
</feature>
<feature type="strand" evidence="8">
    <location>
        <begin position="43"/>
        <end position="47"/>
    </location>
</feature>
<feature type="helix" evidence="8">
    <location>
        <begin position="53"/>
        <end position="62"/>
    </location>
</feature>
<feature type="strand" evidence="8">
    <location>
        <begin position="66"/>
        <end position="69"/>
    </location>
</feature>
<feature type="helix" evidence="8">
    <location>
        <begin position="72"/>
        <end position="81"/>
    </location>
</feature>
<feature type="strand" evidence="8">
    <location>
        <begin position="87"/>
        <end position="90"/>
    </location>
</feature>
<feature type="helix" evidence="8">
    <location>
        <begin position="96"/>
        <end position="98"/>
    </location>
</feature>
<feature type="helix" evidence="8">
    <location>
        <begin position="99"/>
        <end position="104"/>
    </location>
</feature>
<feature type="strand" evidence="8">
    <location>
        <begin position="108"/>
        <end position="114"/>
    </location>
</feature>
<feature type="helix" evidence="8">
    <location>
        <begin position="117"/>
        <end position="130"/>
    </location>
</feature>
<feature type="strand" evidence="7">
    <location>
        <begin position="132"/>
        <end position="134"/>
    </location>
</feature>
<feature type="strand" evidence="8">
    <location>
        <begin position="137"/>
        <end position="143"/>
    </location>
</feature>
<feature type="strand" evidence="8">
    <location>
        <begin position="146"/>
        <end position="148"/>
    </location>
</feature>
<feature type="strand" evidence="8">
    <location>
        <begin position="151"/>
        <end position="154"/>
    </location>
</feature>
<feature type="helix" evidence="8">
    <location>
        <begin position="157"/>
        <end position="168"/>
    </location>
</feature>
<feature type="strand" evidence="8">
    <location>
        <begin position="174"/>
        <end position="181"/>
    </location>
</feature>
<feature type="helix" evidence="8">
    <location>
        <begin position="197"/>
        <end position="213"/>
    </location>
</feature>
<feature type="strand" evidence="8">
    <location>
        <begin position="218"/>
        <end position="220"/>
    </location>
</feature>
<feature type="turn" evidence="8">
    <location>
        <begin position="224"/>
        <end position="226"/>
    </location>
</feature>
<feature type="helix" evidence="8">
    <location>
        <begin position="227"/>
        <end position="232"/>
    </location>
</feature>
<feature type="strand" evidence="8">
    <location>
        <begin position="236"/>
        <end position="241"/>
    </location>
</feature>
<feature type="helix" evidence="8">
    <location>
        <begin position="242"/>
        <end position="245"/>
    </location>
</feature>